<reference key="1">
    <citation type="submission" date="2004-11" db="EMBL/GenBank/DDBJ databases">
        <authorList>
            <consortium name="The German cDNA consortium"/>
        </authorList>
    </citation>
    <scope>NUCLEOTIDE SEQUENCE [LARGE SCALE MRNA] (ISOFORMS 1 AND 2)</scope>
    <source>
        <tissue>Kidney</tissue>
    </source>
</reference>
<accession>Q5RD44</accession>
<accession>Q5R7I2</accession>
<dbReference type="EMBL" id="CR858074">
    <property type="protein sequence ID" value="CAH90313.1"/>
    <property type="molecule type" value="mRNA"/>
</dbReference>
<dbReference type="EMBL" id="CR860134">
    <property type="protein sequence ID" value="CAH92278.1"/>
    <property type="molecule type" value="mRNA"/>
</dbReference>
<dbReference type="RefSeq" id="NP_001125144.1">
    <property type="nucleotide sequence ID" value="NM_001131672.1"/>
</dbReference>
<dbReference type="RefSeq" id="NP_001128854.1">
    <property type="nucleotide sequence ID" value="NM_001135382.2"/>
</dbReference>
<dbReference type="SMR" id="Q5RD44"/>
<dbReference type="FunCoup" id="Q5RD44">
    <property type="interactions" value="1032"/>
</dbReference>
<dbReference type="STRING" id="9601.ENSPPYP00000020391"/>
<dbReference type="GlyCosmos" id="Q5RD44">
    <property type="glycosylation" value="3 sites, No reported glycans"/>
</dbReference>
<dbReference type="GeneID" id="100172030"/>
<dbReference type="KEGG" id="pon:100172030"/>
<dbReference type="CTD" id="6522"/>
<dbReference type="eggNOG" id="KOG1172">
    <property type="taxonomic scope" value="Eukaryota"/>
</dbReference>
<dbReference type="InParanoid" id="Q5RD44"/>
<dbReference type="OrthoDB" id="1735926at2759"/>
<dbReference type="Proteomes" id="UP000001595">
    <property type="component" value="Unplaced"/>
</dbReference>
<dbReference type="GO" id="GO:0016324">
    <property type="term" value="C:apical plasma membrane"/>
    <property type="evidence" value="ECO:0007669"/>
    <property type="project" value="UniProtKB-SubCell"/>
</dbReference>
<dbReference type="GO" id="GO:0016323">
    <property type="term" value="C:basolateral plasma membrane"/>
    <property type="evidence" value="ECO:0000250"/>
    <property type="project" value="UniProtKB"/>
</dbReference>
<dbReference type="GO" id="GO:0140900">
    <property type="term" value="F:chloride:bicarbonate antiporter activity"/>
    <property type="evidence" value="ECO:0000250"/>
    <property type="project" value="UniProtKB"/>
</dbReference>
<dbReference type="GO" id="GO:0043377">
    <property type="term" value="P:negative regulation of CD8-positive, alpha-beta T cell differentiation"/>
    <property type="evidence" value="ECO:0000250"/>
    <property type="project" value="UniProtKB"/>
</dbReference>
<dbReference type="GO" id="GO:2000565">
    <property type="term" value="P:negative regulation of CD8-positive, alpha-beta T cell proliferation"/>
    <property type="evidence" value="ECO:0000250"/>
    <property type="project" value="UniProtKB"/>
</dbReference>
<dbReference type="GO" id="GO:0030316">
    <property type="term" value="P:osteoclast differentiation"/>
    <property type="evidence" value="ECO:0000250"/>
    <property type="project" value="UniProtKB"/>
</dbReference>
<dbReference type="GO" id="GO:0032956">
    <property type="term" value="P:regulation of actin cytoskeleton organization"/>
    <property type="evidence" value="ECO:0000250"/>
    <property type="project" value="UniProtKB"/>
</dbReference>
<dbReference type="GO" id="GO:0045124">
    <property type="term" value="P:regulation of bone resorption"/>
    <property type="evidence" value="ECO:0000250"/>
    <property type="project" value="UniProtKB"/>
</dbReference>
<dbReference type="GO" id="GO:0051453">
    <property type="term" value="P:regulation of intracellular pH"/>
    <property type="evidence" value="ECO:0007669"/>
    <property type="project" value="TreeGrafter"/>
</dbReference>
<dbReference type="FunFam" id="1.10.287.570:FF:000001">
    <property type="entry name" value="Anion exchange protein"/>
    <property type="match status" value="1"/>
</dbReference>
<dbReference type="FunFam" id="3.40.930.10:FF:000004">
    <property type="entry name" value="Anion exchange protein"/>
    <property type="match status" value="1"/>
</dbReference>
<dbReference type="Gene3D" id="1.10.287.570">
    <property type="entry name" value="Helical hairpin bin"/>
    <property type="match status" value="1"/>
</dbReference>
<dbReference type="Gene3D" id="3.40.930.10">
    <property type="entry name" value="Mannitol-specific EII, Chain A"/>
    <property type="match status" value="1"/>
</dbReference>
<dbReference type="InterPro" id="IPR001717">
    <property type="entry name" value="Anion_exchange"/>
</dbReference>
<dbReference type="InterPro" id="IPR002978">
    <property type="entry name" value="Anion_exchange_2"/>
</dbReference>
<dbReference type="InterPro" id="IPR018241">
    <property type="entry name" value="Anion_exchange_CS"/>
</dbReference>
<dbReference type="InterPro" id="IPR013769">
    <property type="entry name" value="Band3_cytoplasmic_dom"/>
</dbReference>
<dbReference type="InterPro" id="IPR011531">
    <property type="entry name" value="HCO3_transpt-like_TM_dom"/>
</dbReference>
<dbReference type="InterPro" id="IPR003020">
    <property type="entry name" value="HCO3_transpt_euk"/>
</dbReference>
<dbReference type="InterPro" id="IPR016152">
    <property type="entry name" value="PTrfase/Anion_transptr"/>
</dbReference>
<dbReference type="NCBIfam" id="TIGR00834">
    <property type="entry name" value="ae"/>
    <property type="match status" value="1"/>
</dbReference>
<dbReference type="PANTHER" id="PTHR11453">
    <property type="entry name" value="ANION EXCHANGE PROTEIN"/>
    <property type="match status" value="1"/>
</dbReference>
<dbReference type="PANTHER" id="PTHR11453:SF14">
    <property type="entry name" value="ANION EXCHANGE PROTEIN 2"/>
    <property type="match status" value="1"/>
</dbReference>
<dbReference type="Pfam" id="PF07565">
    <property type="entry name" value="Band_3_cyto"/>
    <property type="match status" value="1"/>
</dbReference>
<dbReference type="Pfam" id="PF00955">
    <property type="entry name" value="HCO3_cotransp"/>
    <property type="match status" value="1"/>
</dbReference>
<dbReference type="PRINTS" id="PR00165">
    <property type="entry name" value="ANIONEXCHNGR"/>
</dbReference>
<dbReference type="PRINTS" id="PR01188">
    <property type="entry name" value="ANIONEXHNGR2"/>
</dbReference>
<dbReference type="PRINTS" id="PR01231">
    <property type="entry name" value="HCO3TRNSPORT"/>
</dbReference>
<dbReference type="SUPFAM" id="SSF55804">
    <property type="entry name" value="Phoshotransferase/anion transport protein"/>
    <property type="match status" value="1"/>
</dbReference>
<dbReference type="PROSITE" id="PS00219">
    <property type="entry name" value="ANION_EXCHANGER_1"/>
    <property type="match status" value="1"/>
</dbReference>
<dbReference type="PROSITE" id="PS00220">
    <property type="entry name" value="ANION_EXCHANGER_2"/>
    <property type="match status" value="1"/>
</dbReference>
<proteinExistence type="evidence at transcript level"/>
<keyword id="KW-0025">Alternative splicing</keyword>
<keyword id="KW-0039">Anion exchange</keyword>
<keyword id="KW-0050">Antiport</keyword>
<keyword id="KW-1003">Cell membrane</keyword>
<keyword id="KW-0325">Glycoprotein</keyword>
<keyword id="KW-0406">Ion transport</keyword>
<keyword id="KW-0449">Lipoprotein</keyword>
<keyword id="KW-0472">Membrane</keyword>
<keyword id="KW-0488">Methylation</keyword>
<keyword id="KW-0564">Palmitate</keyword>
<keyword id="KW-0597">Phosphoprotein</keyword>
<keyword id="KW-1185">Reference proteome</keyword>
<keyword id="KW-0812">Transmembrane</keyword>
<keyword id="KW-1133">Transmembrane helix</keyword>
<keyword id="KW-0813">Transport</keyword>
<comment type="function">
    <text evidence="3">Sodium-independent anion exchanger which mediates the electroneutral exchange of chloride for bicarbonate ions across the cell membrane (By similarity). Plays an important role in osteoclast differentiation and function (By similarity). Regulates bone resorption and calpain-dependent actin cytoskeleton organization in osteoclasts via anion exchange-dependent control of pH (By similarity). Essential for intracellular pH regulation in CD8(+) T-cells upon CD3 stimulation, modulating CD8(+) T-cell response (By similarity).</text>
</comment>
<comment type="catalytic activity">
    <reaction evidence="3">
        <text>hydrogencarbonate(in) + chloride(out) = hydrogencarbonate(out) + chloride(in)</text>
        <dbReference type="Rhea" id="RHEA:72363"/>
        <dbReference type="ChEBI" id="CHEBI:17544"/>
        <dbReference type="ChEBI" id="CHEBI:17996"/>
    </reaction>
</comment>
<comment type="subcellular location">
    <subcellularLocation>
        <location evidence="2">Apical cell membrane</location>
        <topology evidence="4">Multi-pass membrane protein</topology>
    </subcellularLocation>
    <subcellularLocation>
        <location evidence="2">Basolateral cell membrane</location>
        <topology evidence="4">Multi-pass membrane protein</topology>
    </subcellularLocation>
</comment>
<comment type="alternative products">
    <event type="alternative splicing"/>
    <isoform>
        <id>Q5RD44-1</id>
        <name>1</name>
        <sequence type="displayed"/>
    </isoform>
    <isoform>
        <id>Q5RD44-2</id>
        <name>2</name>
        <sequence type="described" ref="VSP_035783"/>
    </isoform>
</comment>
<comment type="similarity">
    <text evidence="7">Belongs to the anion exchanger (TC 2.A.31) family.</text>
</comment>
<sequence>MSSAPRRPAKGADSFCTPEPESLGPGTPGFPEQEEDELHRTLGVERFEEILQEAGSRGGEEPGRSYGEEDFEYHRQSSHHIHHPLSTHLPPDARRRKTPQGPGRKPRRRPGASPTGETPTIEEGEEDEDEASEAEGARALTQPSPVSTPSSVQFFLQEDDSADRKAERTSPSSPAPLPHQEATPRASKGAQAGTQVEEAEAVAVASGTAGGDDGGASGRPLPKAQPGHRSYNLQERRRIGSMTGAEQALLPRVPTDEIEAQTLATADLDLMKSHRFEDVPGVRRHLVRKNAKGSTQSGREGREPGPTPRARPRAPHKPHEVFVELNELLLDKNQEPQWRETARWIKFEEDVEEETERWGKPHVASLSFRSLLELRRTLAHGAVLLDLDQQTLPGVAHQVVEQMVISDQIKAEDRANVLRALLLKHSHPSDEKDFSFPRNISAGSLGSLLGHHHGQGAESDPHVTEPLIGGVPETRLEVERERELPPPAPPAGITRSKSKHELKLLEKIPENAEATVVLVGCVEFLSRPTMAFVRLREAVELDAVLEVPVPVRFLFLLLGPSSANMDYHEIGRSISTLMSDKQFHEAAYLADEREDLLTAINAFLDCSVVLPPSEVQGEELLRSVAHFQRQMLKKREEQGRLLPTGAGLEPKSAQDKALLQMVEAAGAAEDDPLRRTGRPFGGLIRDVRRRYPHYLSDFRDALDPQCLAAVIFIYFAALSPAITFGGLLGEKTQDLIGVSELIMSTALQGVVFCLLGAQPLLVIGFSGPLLVFEEAFFSFCSSNHLEYLVGRVWIGFWLVLLALLMVALEGSFLVRFVSRFTQEIFAFLISLIFIYETFYKLVKIFQEHPLHGCSASNSSEVDGGENMTWAVARPTLGPGNRSLAGQSGQGKPRGQPNTALLSLVLMAGTFFIAFFLRKFKNSRFFPGRIRRVIGDFGVPIAILIMVLVDYSIEDTYTQKLSVPSGFSVTAPEKRGWVINPLGEKSPFPVWMMVASLLPAILVFILIFMETQITTLIISKKERMLQKGSGFHLDLLLIVAMGGICALFGLPWLAAATVRSVTHANALTVMSKAVAPGDKPKIQEVKEQRVTGLLVALLVGLSIVIGDLLRQIPLAVLFGIFLYMGVTSLNGIQFYERLHLLLMPPKHHPDVTYVKKVRTLRMHLFTALQLLCLALLWAVMSTAASLAFPFILILTVPLRMVVLTRIFTDREMKCLDANEAEPVFDEREGVDEYNEMPMPV</sequence>
<organism>
    <name type="scientific">Pongo abelii</name>
    <name type="common">Sumatran orangutan</name>
    <name type="synonym">Pongo pygmaeus abelii</name>
    <dbReference type="NCBI Taxonomy" id="9601"/>
    <lineage>
        <taxon>Eukaryota</taxon>
        <taxon>Metazoa</taxon>
        <taxon>Chordata</taxon>
        <taxon>Craniata</taxon>
        <taxon>Vertebrata</taxon>
        <taxon>Euteleostomi</taxon>
        <taxon>Mammalia</taxon>
        <taxon>Eutheria</taxon>
        <taxon>Euarchontoglires</taxon>
        <taxon>Primates</taxon>
        <taxon>Haplorrhini</taxon>
        <taxon>Catarrhini</taxon>
        <taxon>Hominidae</taxon>
        <taxon>Pongo</taxon>
    </lineage>
</organism>
<protein>
    <recommendedName>
        <fullName>Anion exchange protein 2</fullName>
        <shortName>AE 2</shortName>
        <shortName>Anion exchanger 2</shortName>
    </recommendedName>
    <alternativeName>
        <fullName>Solute carrier family 4 member 2</fullName>
    </alternativeName>
</protein>
<gene>
    <name type="primary">SLC4A2</name>
    <name type="synonym">AE2</name>
</gene>
<evidence type="ECO:0000250" key="1"/>
<evidence type="ECO:0000250" key="2">
    <source>
        <dbReference type="UniProtKB" id="P04920"/>
    </source>
</evidence>
<evidence type="ECO:0000250" key="3">
    <source>
        <dbReference type="UniProtKB" id="P13808"/>
    </source>
</evidence>
<evidence type="ECO:0000255" key="4"/>
<evidence type="ECO:0000256" key="5">
    <source>
        <dbReference type="SAM" id="MobiDB-lite"/>
    </source>
</evidence>
<evidence type="ECO:0000303" key="6">
    <source ref="1"/>
</evidence>
<evidence type="ECO:0000305" key="7"/>
<name>B3A2_PONAB</name>
<feature type="chain" id="PRO_0000354092" description="Anion exchange protein 2">
    <location>
        <begin position="1"/>
        <end position="1239"/>
    </location>
</feature>
<feature type="topological domain" description="Cytoplasmic" evidence="4">
    <location>
        <begin position="1"/>
        <end position="706"/>
    </location>
</feature>
<feature type="transmembrane region" description="Helical" evidence="4">
    <location>
        <begin position="707"/>
        <end position="727"/>
    </location>
</feature>
<feature type="transmembrane region" description="Helical" evidence="4">
    <location>
        <begin position="752"/>
        <end position="772"/>
    </location>
</feature>
<feature type="transmembrane region" description="Helical" evidence="4">
    <location>
        <begin position="794"/>
        <end position="814"/>
    </location>
</feature>
<feature type="transmembrane region" description="Helical" evidence="4">
    <location>
        <begin position="824"/>
        <end position="844"/>
    </location>
</feature>
<feature type="topological domain" description="Extracellular" evidence="4">
    <location>
        <begin position="845"/>
        <end position="895"/>
    </location>
</feature>
<feature type="transmembrane region" description="Helical" evidence="4">
    <location>
        <begin position="896"/>
        <end position="916"/>
    </location>
</feature>
<feature type="topological domain" description="Cytoplasmic" evidence="4">
    <location>
        <begin position="917"/>
        <end position="931"/>
    </location>
</feature>
<feature type="transmembrane region" description="Helical" evidence="4">
    <location>
        <begin position="932"/>
        <end position="952"/>
    </location>
</feature>
<feature type="transmembrane region" description="Helical" evidence="4">
    <location>
        <begin position="987"/>
        <end position="1007"/>
    </location>
</feature>
<feature type="transmembrane region" description="Helical" evidence="4">
    <location>
        <begin position="1034"/>
        <end position="1054"/>
    </location>
</feature>
<feature type="transmembrane region" description="Helical" evidence="4">
    <location>
        <begin position="1088"/>
        <end position="1108"/>
    </location>
</feature>
<feature type="transmembrane region" description="Helical" evidence="4">
    <location>
        <begin position="1111"/>
        <end position="1131"/>
    </location>
</feature>
<feature type="transmembrane region" description="Helical" evidence="4">
    <location>
        <begin position="1172"/>
        <end position="1192"/>
    </location>
</feature>
<feature type="region of interest" description="Disordered" evidence="5">
    <location>
        <begin position="1"/>
        <end position="237"/>
    </location>
</feature>
<feature type="region of interest" description="Disordered" evidence="5">
    <location>
        <begin position="285"/>
        <end position="318"/>
    </location>
</feature>
<feature type="region of interest" description="Disordered" evidence="5">
    <location>
        <begin position="447"/>
        <end position="468"/>
    </location>
</feature>
<feature type="region of interest" description="Membrane (anion exchange)">
    <location>
        <begin position="706"/>
        <end position="1239"/>
    </location>
</feature>
<feature type="region of interest" description="Membrane (anion exchange)">
    <location>
        <begin position="708"/>
        <end position="1239"/>
    </location>
</feature>
<feature type="compositionally biased region" description="Basic and acidic residues" evidence="5">
    <location>
        <begin position="37"/>
        <end position="49"/>
    </location>
</feature>
<feature type="compositionally biased region" description="Basic and acidic residues" evidence="5">
    <location>
        <begin position="58"/>
        <end position="75"/>
    </location>
</feature>
<feature type="compositionally biased region" description="Basic residues" evidence="5">
    <location>
        <begin position="76"/>
        <end position="85"/>
    </location>
</feature>
<feature type="compositionally biased region" description="Basic residues" evidence="5">
    <location>
        <begin position="94"/>
        <end position="110"/>
    </location>
</feature>
<feature type="compositionally biased region" description="Acidic residues" evidence="5">
    <location>
        <begin position="120"/>
        <end position="133"/>
    </location>
</feature>
<feature type="compositionally biased region" description="Low complexity" evidence="5">
    <location>
        <begin position="141"/>
        <end position="155"/>
    </location>
</feature>
<feature type="compositionally biased region" description="Low complexity" evidence="5">
    <location>
        <begin position="189"/>
        <end position="207"/>
    </location>
</feature>
<feature type="compositionally biased region" description="Gly residues" evidence="5">
    <location>
        <begin position="208"/>
        <end position="217"/>
    </location>
</feature>
<feature type="modified residue" description="Phosphoserine" evidence="2">
    <location>
        <position position="113"/>
    </location>
</feature>
<feature type="modified residue" description="Phosphoserine" evidence="2">
    <location>
        <position position="132"/>
    </location>
</feature>
<feature type="modified residue" description="Phosphoserine" evidence="2">
    <location>
        <position position="144"/>
    </location>
</feature>
<feature type="modified residue" description="Phosphoserine" evidence="3">
    <location>
        <position position="170"/>
    </location>
</feature>
<feature type="modified residue" description="Phosphoserine" evidence="3">
    <location>
        <position position="172"/>
    </location>
</feature>
<feature type="modified residue" description="Phosphoserine" evidence="2">
    <location>
        <position position="241"/>
    </location>
</feature>
<feature type="modified residue" description="Phosphothreonine" evidence="3">
    <location>
        <position position="255"/>
    </location>
</feature>
<feature type="modified residue" description="N6-methyllysine" evidence="2">
    <location>
        <position position="272"/>
    </location>
</feature>
<feature type="modified residue" description="Phosphoserine" evidence="2">
    <location>
        <position position="441"/>
    </location>
</feature>
<feature type="lipid moiety-binding region" description="S-palmitoyl cysteine" evidence="1">
    <location>
        <position position="1171"/>
    </location>
</feature>
<feature type="glycosylation site" description="N-linked (GlcNAc...) asparagine" evidence="4">
    <location>
        <position position="857"/>
    </location>
</feature>
<feature type="glycosylation site" description="N-linked (GlcNAc...) asparagine" evidence="4">
    <location>
        <position position="866"/>
    </location>
</feature>
<feature type="glycosylation site" description="N-linked (GlcNAc...) asparagine" evidence="4">
    <location>
        <position position="880"/>
    </location>
</feature>
<feature type="splice variant" id="VSP_035783" description="In isoform 2." evidence="6">
    <original>MSSAPRRPAKGADSFCT</original>
    <variation>MDFLLRPQ</variation>
    <location>
        <begin position="1"/>
        <end position="17"/>
    </location>
</feature>
<feature type="sequence conflict" description="In Ref. 1; CAH92278." evidence="7" ref="1">
    <original>V</original>
    <variation>A</variation>
    <location>
        <position position="471"/>
    </location>
</feature>
<feature type="sequence conflict" description="In Ref. 1; CAH92278." evidence="7" ref="1">
    <original>V</original>
    <variation>A</variation>
    <location>
        <position position="516"/>
    </location>
</feature>
<feature type="sequence conflict" description="In Ref. 1; CAH90313." evidence="7" ref="1">
    <original>L</original>
    <variation>P</variation>
    <location>
        <position position="1066"/>
    </location>
</feature>